<proteinExistence type="inferred from homology"/>
<sequence length="162" mass="18855">MRNITSFFKTFLLWELLKGMKVTGKHFFTRKVTVQYPDEKTPISNRFRGLHALRRYENGEERCIACKLCEVVCPALAITINSTEREDGSRRTSSYEIDLFKCIFCGYCEESCPVDSIVETNILEYHFEERGENIMTKAKLLAIGDKYEAQIAADRLQDKDFR</sequence>
<keyword id="KW-0004">4Fe-4S</keyword>
<keyword id="KW-0997">Cell inner membrane</keyword>
<keyword id="KW-1003">Cell membrane</keyword>
<keyword id="KW-0408">Iron</keyword>
<keyword id="KW-0411">Iron-sulfur</keyword>
<keyword id="KW-0472">Membrane</keyword>
<keyword id="KW-0479">Metal-binding</keyword>
<keyword id="KW-0520">NAD</keyword>
<keyword id="KW-0874">Quinone</keyword>
<keyword id="KW-0677">Repeat</keyword>
<keyword id="KW-1278">Translocase</keyword>
<keyword id="KW-0830">Ubiquinone</keyword>
<evidence type="ECO:0000255" key="1">
    <source>
        <dbReference type="HAMAP-Rule" id="MF_01351"/>
    </source>
</evidence>
<reference key="1">
    <citation type="submission" date="2007-12" db="EMBL/GenBank/DDBJ databases">
        <title>Complete sequence of chromosome of Francisella philomiragia subsp. philomiragia ATCC 25017.</title>
        <authorList>
            <consortium name="US DOE Joint Genome Institute"/>
            <person name="Copeland A."/>
            <person name="Lucas S."/>
            <person name="Lapidus A."/>
            <person name="Barry K."/>
            <person name="Detter J.C."/>
            <person name="Glavina del Rio T."/>
            <person name="Hammon N."/>
            <person name="Israni S."/>
            <person name="Dalin E."/>
            <person name="Tice H."/>
            <person name="Pitluck S."/>
            <person name="Chain P."/>
            <person name="Malfatti S."/>
            <person name="Shin M."/>
            <person name="Vergez L."/>
            <person name="Schmutz J."/>
            <person name="Larimer F."/>
            <person name="Land M."/>
            <person name="Hauser L."/>
            <person name="Richardson P."/>
        </authorList>
    </citation>
    <scope>NUCLEOTIDE SEQUENCE [LARGE SCALE GENOMIC DNA]</scope>
    <source>
        <strain>ATCC 25017 / CCUG 19701 / FSC 153 / O#319-036</strain>
    </source>
</reference>
<gene>
    <name evidence="1" type="primary">nuoI</name>
    <name type="ordered locus">Fphi_0937</name>
</gene>
<comment type="function">
    <text evidence="1">NDH-1 shuttles electrons from NADH, via FMN and iron-sulfur (Fe-S) centers, to quinones in the respiratory chain. The immediate electron acceptor for the enzyme in this species is believed to be ubiquinone. Couples the redox reaction to proton translocation (for every two electrons transferred, four hydrogen ions are translocated across the cytoplasmic membrane), and thus conserves the redox energy in a proton gradient.</text>
</comment>
<comment type="catalytic activity">
    <reaction evidence="1">
        <text>a quinone + NADH + 5 H(+)(in) = a quinol + NAD(+) + 4 H(+)(out)</text>
        <dbReference type="Rhea" id="RHEA:57888"/>
        <dbReference type="ChEBI" id="CHEBI:15378"/>
        <dbReference type="ChEBI" id="CHEBI:24646"/>
        <dbReference type="ChEBI" id="CHEBI:57540"/>
        <dbReference type="ChEBI" id="CHEBI:57945"/>
        <dbReference type="ChEBI" id="CHEBI:132124"/>
    </reaction>
</comment>
<comment type="cofactor">
    <cofactor evidence="1">
        <name>[4Fe-4S] cluster</name>
        <dbReference type="ChEBI" id="CHEBI:49883"/>
    </cofactor>
    <text evidence="1">Binds 2 [4Fe-4S] clusters per subunit.</text>
</comment>
<comment type="subunit">
    <text evidence="1">NDH-1 is composed of 14 different subunits. Subunits NuoA, H, J, K, L, M, N constitute the membrane sector of the complex.</text>
</comment>
<comment type="subcellular location">
    <subcellularLocation>
        <location evidence="1">Cell inner membrane</location>
        <topology evidence="1">Peripheral membrane protein</topology>
    </subcellularLocation>
</comment>
<comment type="similarity">
    <text evidence="1">Belongs to the complex I 23 kDa subunit family.</text>
</comment>
<protein>
    <recommendedName>
        <fullName evidence="1">NADH-quinone oxidoreductase subunit I</fullName>
        <ecNumber evidence="1">7.1.1.-</ecNumber>
    </recommendedName>
    <alternativeName>
        <fullName evidence="1">NADH dehydrogenase I subunit I</fullName>
    </alternativeName>
    <alternativeName>
        <fullName evidence="1">NDH-1 subunit I</fullName>
    </alternativeName>
</protein>
<accession>B0TWQ2</accession>
<feature type="chain" id="PRO_1000086956" description="NADH-quinone oxidoreductase subunit I">
    <location>
        <begin position="1"/>
        <end position="162"/>
    </location>
</feature>
<feature type="domain" description="4Fe-4S ferredoxin-type 1" evidence="1">
    <location>
        <begin position="54"/>
        <end position="83"/>
    </location>
</feature>
<feature type="domain" description="4Fe-4S ferredoxin-type 2" evidence="1">
    <location>
        <begin position="93"/>
        <end position="122"/>
    </location>
</feature>
<feature type="binding site" evidence="1">
    <location>
        <position position="63"/>
    </location>
    <ligand>
        <name>[4Fe-4S] cluster</name>
        <dbReference type="ChEBI" id="CHEBI:49883"/>
        <label>1</label>
    </ligand>
</feature>
<feature type="binding site" evidence="1">
    <location>
        <position position="66"/>
    </location>
    <ligand>
        <name>[4Fe-4S] cluster</name>
        <dbReference type="ChEBI" id="CHEBI:49883"/>
        <label>1</label>
    </ligand>
</feature>
<feature type="binding site" evidence="1">
    <location>
        <position position="69"/>
    </location>
    <ligand>
        <name>[4Fe-4S] cluster</name>
        <dbReference type="ChEBI" id="CHEBI:49883"/>
        <label>1</label>
    </ligand>
</feature>
<feature type="binding site" evidence="1">
    <location>
        <position position="73"/>
    </location>
    <ligand>
        <name>[4Fe-4S] cluster</name>
        <dbReference type="ChEBI" id="CHEBI:49883"/>
        <label>2</label>
    </ligand>
</feature>
<feature type="binding site" evidence="1">
    <location>
        <position position="102"/>
    </location>
    <ligand>
        <name>[4Fe-4S] cluster</name>
        <dbReference type="ChEBI" id="CHEBI:49883"/>
        <label>2</label>
    </ligand>
</feature>
<feature type="binding site" evidence="1">
    <location>
        <position position="105"/>
    </location>
    <ligand>
        <name>[4Fe-4S] cluster</name>
        <dbReference type="ChEBI" id="CHEBI:49883"/>
        <label>2</label>
    </ligand>
</feature>
<feature type="binding site" evidence="1">
    <location>
        <position position="108"/>
    </location>
    <ligand>
        <name>[4Fe-4S] cluster</name>
        <dbReference type="ChEBI" id="CHEBI:49883"/>
        <label>2</label>
    </ligand>
</feature>
<feature type="binding site" evidence="1">
    <location>
        <position position="112"/>
    </location>
    <ligand>
        <name>[4Fe-4S] cluster</name>
        <dbReference type="ChEBI" id="CHEBI:49883"/>
        <label>1</label>
    </ligand>
</feature>
<organism>
    <name type="scientific">Francisella philomiragia subsp. philomiragia (strain ATCC 25017 / CCUG 19701 / FSC 153 / O#319-036)</name>
    <dbReference type="NCBI Taxonomy" id="484022"/>
    <lineage>
        <taxon>Bacteria</taxon>
        <taxon>Pseudomonadati</taxon>
        <taxon>Pseudomonadota</taxon>
        <taxon>Gammaproteobacteria</taxon>
        <taxon>Thiotrichales</taxon>
        <taxon>Francisellaceae</taxon>
        <taxon>Francisella</taxon>
    </lineage>
</organism>
<name>NUOI_FRAP2</name>
<dbReference type="EC" id="7.1.1.-" evidence="1"/>
<dbReference type="EMBL" id="CP000937">
    <property type="protein sequence ID" value="ABZ87160.1"/>
    <property type="molecule type" value="Genomic_DNA"/>
</dbReference>
<dbReference type="SMR" id="B0TWQ2"/>
<dbReference type="KEGG" id="fph:Fphi_0937"/>
<dbReference type="eggNOG" id="COG1143">
    <property type="taxonomic scope" value="Bacteria"/>
</dbReference>
<dbReference type="HOGENOM" id="CLU_067218_5_1_6"/>
<dbReference type="GO" id="GO:0005886">
    <property type="term" value="C:plasma membrane"/>
    <property type="evidence" value="ECO:0007669"/>
    <property type="project" value="UniProtKB-SubCell"/>
</dbReference>
<dbReference type="GO" id="GO:0051539">
    <property type="term" value="F:4 iron, 4 sulfur cluster binding"/>
    <property type="evidence" value="ECO:0007669"/>
    <property type="project" value="UniProtKB-KW"/>
</dbReference>
<dbReference type="GO" id="GO:0005506">
    <property type="term" value="F:iron ion binding"/>
    <property type="evidence" value="ECO:0007669"/>
    <property type="project" value="UniProtKB-UniRule"/>
</dbReference>
<dbReference type="GO" id="GO:0050136">
    <property type="term" value="F:NADH:ubiquinone reductase (non-electrogenic) activity"/>
    <property type="evidence" value="ECO:0007669"/>
    <property type="project" value="UniProtKB-UniRule"/>
</dbReference>
<dbReference type="GO" id="GO:0048038">
    <property type="term" value="F:quinone binding"/>
    <property type="evidence" value="ECO:0007669"/>
    <property type="project" value="UniProtKB-KW"/>
</dbReference>
<dbReference type="GO" id="GO:0009060">
    <property type="term" value="P:aerobic respiration"/>
    <property type="evidence" value="ECO:0007669"/>
    <property type="project" value="TreeGrafter"/>
</dbReference>
<dbReference type="FunFam" id="3.30.70.3270:FF:000003">
    <property type="entry name" value="NADH-quinone oxidoreductase subunit I"/>
    <property type="match status" value="1"/>
</dbReference>
<dbReference type="Gene3D" id="3.30.70.3270">
    <property type="match status" value="1"/>
</dbReference>
<dbReference type="HAMAP" id="MF_01351">
    <property type="entry name" value="NDH1_NuoI"/>
    <property type="match status" value="1"/>
</dbReference>
<dbReference type="InterPro" id="IPR017896">
    <property type="entry name" value="4Fe4S_Fe-S-bd"/>
</dbReference>
<dbReference type="InterPro" id="IPR017900">
    <property type="entry name" value="4Fe4S_Fe_S_CS"/>
</dbReference>
<dbReference type="InterPro" id="IPR010226">
    <property type="entry name" value="NADH_quinone_OxRdtase_chainI"/>
</dbReference>
<dbReference type="NCBIfam" id="TIGR01971">
    <property type="entry name" value="NuoI"/>
    <property type="match status" value="1"/>
</dbReference>
<dbReference type="NCBIfam" id="NF004538">
    <property type="entry name" value="PRK05888.1-4"/>
    <property type="match status" value="1"/>
</dbReference>
<dbReference type="PANTHER" id="PTHR10849:SF20">
    <property type="entry name" value="NADH DEHYDROGENASE [UBIQUINONE] IRON-SULFUR PROTEIN 8, MITOCHONDRIAL"/>
    <property type="match status" value="1"/>
</dbReference>
<dbReference type="PANTHER" id="PTHR10849">
    <property type="entry name" value="NADH DEHYDROGENASE UBIQUINONE IRON-SULFUR PROTEIN 8, MITOCHONDRIAL"/>
    <property type="match status" value="1"/>
</dbReference>
<dbReference type="Pfam" id="PF12838">
    <property type="entry name" value="Fer4_7"/>
    <property type="match status" value="1"/>
</dbReference>
<dbReference type="SUPFAM" id="SSF54862">
    <property type="entry name" value="4Fe-4S ferredoxins"/>
    <property type="match status" value="1"/>
</dbReference>
<dbReference type="PROSITE" id="PS00198">
    <property type="entry name" value="4FE4S_FER_1"/>
    <property type="match status" value="2"/>
</dbReference>
<dbReference type="PROSITE" id="PS51379">
    <property type="entry name" value="4FE4S_FER_2"/>
    <property type="match status" value="2"/>
</dbReference>